<gene>
    <name type="primary">H2Bv1</name>
    <name type="ORF">DDB_G0293758</name>
</gene>
<accession>Q54BC2</accession>
<proteinExistence type="inferred from homology"/>
<protein>
    <recommendedName>
        <fullName>Histone H2B.v1</fullName>
    </recommendedName>
</protein>
<keyword id="KW-1185">Reference proteome</keyword>
<dbReference type="EMBL" id="AAFI02000219">
    <property type="protein sequence ID" value="EAL60556.1"/>
    <property type="molecule type" value="Genomic_DNA"/>
</dbReference>
<dbReference type="RefSeq" id="XP_628972.1">
    <property type="nucleotide sequence ID" value="XM_628970.1"/>
</dbReference>
<dbReference type="SMR" id="Q54BC2"/>
<dbReference type="STRING" id="44689.Q54BC2"/>
<dbReference type="PaxDb" id="44689-DDB0216303"/>
<dbReference type="EnsemblProtists" id="EAL60556">
    <property type="protein sequence ID" value="EAL60556"/>
    <property type="gene ID" value="DDB_G0293758"/>
</dbReference>
<dbReference type="GeneID" id="8629401"/>
<dbReference type="KEGG" id="ddi:DDB_G0293758"/>
<dbReference type="dictyBase" id="DDB_G0293758">
    <property type="gene designation" value="H2Bv1"/>
</dbReference>
<dbReference type="VEuPathDB" id="AmoebaDB:DDB_G0293758"/>
<dbReference type="eggNOG" id="KOG1744">
    <property type="taxonomic scope" value="Eukaryota"/>
</dbReference>
<dbReference type="eggNOG" id="KOG1756">
    <property type="taxonomic scope" value="Eukaryota"/>
</dbReference>
<dbReference type="HOGENOM" id="CLU_1226730_0_0_1"/>
<dbReference type="InParanoid" id="Q54BC2"/>
<dbReference type="OMA" id="KVKQMNY"/>
<dbReference type="Reactome" id="R-DDI-2299718">
    <property type="pathway name" value="Condensation of Prophase Chromosomes"/>
</dbReference>
<dbReference type="Reactome" id="R-DDI-2559580">
    <property type="pathway name" value="Oxidative Stress Induced Senescence"/>
</dbReference>
<dbReference type="Reactome" id="R-DDI-3214815">
    <property type="pathway name" value="HDACs deacetylate histones"/>
</dbReference>
<dbReference type="Reactome" id="R-DDI-427359">
    <property type="pathway name" value="SIRT1 negatively regulates rRNA expression"/>
</dbReference>
<dbReference type="Reactome" id="R-DDI-5625886">
    <property type="pathway name" value="Activated PKN1 stimulates transcription of AR (androgen receptor) regulated genes KLK2 and KLK3"/>
</dbReference>
<dbReference type="Reactome" id="R-DDI-5689880">
    <property type="pathway name" value="Ub-specific processing proteases"/>
</dbReference>
<dbReference type="Reactome" id="R-DDI-5693565">
    <property type="pathway name" value="Recruitment and ATM-mediated phosphorylation of repair and signaling proteins at DNA double strand breaks"/>
</dbReference>
<dbReference type="Reactome" id="R-DDI-68616">
    <property type="pathway name" value="Assembly of the ORC complex at the origin of replication"/>
</dbReference>
<dbReference type="Reactome" id="R-DDI-73772">
    <property type="pathway name" value="RNA Polymerase I Promoter Escape"/>
</dbReference>
<dbReference type="Reactome" id="R-DDI-9843940">
    <property type="pathway name" value="Regulation of endogenous retroelements by KRAB-ZFP proteins"/>
</dbReference>
<dbReference type="PRO" id="PR:Q54BC2"/>
<dbReference type="Proteomes" id="UP000002195">
    <property type="component" value="Chromosome 6"/>
</dbReference>
<dbReference type="GO" id="GO:0000786">
    <property type="term" value="C:nucleosome"/>
    <property type="evidence" value="ECO:0007669"/>
    <property type="project" value="InterPro"/>
</dbReference>
<dbReference type="GO" id="GO:0003677">
    <property type="term" value="F:DNA binding"/>
    <property type="evidence" value="ECO:0000318"/>
    <property type="project" value="GO_Central"/>
</dbReference>
<dbReference type="GO" id="GO:0046982">
    <property type="term" value="F:protein heterodimerization activity"/>
    <property type="evidence" value="ECO:0007669"/>
    <property type="project" value="InterPro"/>
</dbReference>
<dbReference type="GO" id="GO:0030527">
    <property type="term" value="F:structural constituent of chromatin"/>
    <property type="evidence" value="ECO:0007669"/>
    <property type="project" value="InterPro"/>
</dbReference>
<dbReference type="CDD" id="cd00074">
    <property type="entry name" value="HFD_H2A"/>
    <property type="match status" value="1"/>
</dbReference>
<dbReference type="Gene3D" id="1.10.20.10">
    <property type="entry name" value="Histone, subunit A"/>
    <property type="match status" value="1"/>
</dbReference>
<dbReference type="InterPro" id="IPR009072">
    <property type="entry name" value="Histone-fold"/>
</dbReference>
<dbReference type="InterPro" id="IPR002119">
    <property type="entry name" value="Histone_H2A"/>
</dbReference>
<dbReference type="InterPro" id="IPR007125">
    <property type="entry name" value="Histone_H2A/H2B/H3"/>
</dbReference>
<dbReference type="InterPro" id="IPR000558">
    <property type="entry name" value="Histone_H2B"/>
</dbReference>
<dbReference type="PANTHER" id="PTHR23428">
    <property type="entry name" value="HISTONE H2B"/>
    <property type="match status" value="1"/>
</dbReference>
<dbReference type="Pfam" id="PF00125">
    <property type="entry name" value="Histone"/>
    <property type="match status" value="2"/>
</dbReference>
<dbReference type="PRINTS" id="PR00621">
    <property type="entry name" value="HISTONEH2B"/>
</dbReference>
<dbReference type="SMART" id="SM00414">
    <property type="entry name" value="H2A"/>
    <property type="match status" value="1"/>
</dbReference>
<dbReference type="SMART" id="SM00427">
    <property type="entry name" value="H2B"/>
    <property type="match status" value="1"/>
</dbReference>
<dbReference type="SUPFAM" id="SSF47113">
    <property type="entry name" value="Histone-fold"/>
    <property type="match status" value="1"/>
</dbReference>
<name>H2BV1_DICDI</name>
<organism>
    <name type="scientific">Dictyostelium discoideum</name>
    <name type="common">Social amoeba</name>
    <dbReference type="NCBI Taxonomy" id="44689"/>
    <lineage>
        <taxon>Eukaryota</taxon>
        <taxon>Amoebozoa</taxon>
        <taxon>Evosea</taxon>
        <taxon>Eumycetozoa</taxon>
        <taxon>Dictyostelia</taxon>
        <taxon>Dictyosteliales</taxon>
        <taxon>Dictyosteliaceae</taxon>
        <taxon>Dictyostelium</taxon>
    </lineage>
</organism>
<feature type="chain" id="PRO_0000389158" description="Histone H2B.v1">
    <location>
        <begin position="1"/>
        <end position="226"/>
    </location>
</feature>
<feature type="region of interest" description="Disordered" evidence="1">
    <location>
        <begin position="100"/>
        <end position="130"/>
    </location>
</feature>
<feature type="compositionally biased region" description="Low complexity" evidence="1">
    <location>
        <begin position="114"/>
        <end position="123"/>
    </location>
</feature>
<sequence length="226" mass="25214">MRHRGRRSTQHTHVREGIYIKKLIKQINPACRIQVKSVQILTSLIRDTTISIMNEAFHLVQLSNKRTLSARDVQTSVRLCTVGEISRHAVSEGVKRVTNFNSAKQYPPQPPPAKTATPSSPSSIPAPPISHPPIIPHSYLKTKVKQMNYNYRISNSSMHYLSAVIEYLLSEILELSSNGAVSAKRTLIQPRDIFLAIANDIELHSMYGHVIIPGGGTKPLFNSLSF</sequence>
<reference key="1">
    <citation type="journal article" date="2005" name="Nature">
        <title>The genome of the social amoeba Dictyostelium discoideum.</title>
        <authorList>
            <person name="Eichinger L."/>
            <person name="Pachebat J.A."/>
            <person name="Gloeckner G."/>
            <person name="Rajandream M.A."/>
            <person name="Sucgang R."/>
            <person name="Berriman M."/>
            <person name="Song J."/>
            <person name="Olsen R."/>
            <person name="Szafranski K."/>
            <person name="Xu Q."/>
            <person name="Tunggal B."/>
            <person name="Kummerfeld S."/>
            <person name="Madera M."/>
            <person name="Konfortov B.A."/>
            <person name="Rivero F."/>
            <person name="Bankier A.T."/>
            <person name="Lehmann R."/>
            <person name="Hamlin N."/>
            <person name="Davies R."/>
            <person name="Gaudet P."/>
            <person name="Fey P."/>
            <person name="Pilcher K."/>
            <person name="Chen G."/>
            <person name="Saunders D."/>
            <person name="Sodergren E.J."/>
            <person name="Davis P."/>
            <person name="Kerhornou A."/>
            <person name="Nie X."/>
            <person name="Hall N."/>
            <person name="Anjard C."/>
            <person name="Hemphill L."/>
            <person name="Bason N."/>
            <person name="Farbrother P."/>
            <person name="Desany B."/>
            <person name="Just E."/>
            <person name="Morio T."/>
            <person name="Rost R."/>
            <person name="Churcher C.M."/>
            <person name="Cooper J."/>
            <person name="Haydock S."/>
            <person name="van Driessche N."/>
            <person name="Cronin A."/>
            <person name="Goodhead I."/>
            <person name="Muzny D.M."/>
            <person name="Mourier T."/>
            <person name="Pain A."/>
            <person name="Lu M."/>
            <person name="Harper D."/>
            <person name="Lindsay R."/>
            <person name="Hauser H."/>
            <person name="James K.D."/>
            <person name="Quiles M."/>
            <person name="Madan Babu M."/>
            <person name="Saito T."/>
            <person name="Buchrieser C."/>
            <person name="Wardroper A."/>
            <person name="Felder M."/>
            <person name="Thangavelu M."/>
            <person name="Johnson D."/>
            <person name="Knights A."/>
            <person name="Loulseged H."/>
            <person name="Mungall K.L."/>
            <person name="Oliver K."/>
            <person name="Price C."/>
            <person name="Quail M.A."/>
            <person name="Urushihara H."/>
            <person name="Hernandez J."/>
            <person name="Rabbinowitsch E."/>
            <person name="Steffen D."/>
            <person name="Sanders M."/>
            <person name="Ma J."/>
            <person name="Kohara Y."/>
            <person name="Sharp S."/>
            <person name="Simmonds M.N."/>
            <person name="Spiegler S."/>
            <person name="Tivey A."/>
            <person name="Sugano S."/>
            <person name="White B."/>
            <person name="Walker D."/>
            <person name="Woodward J.R."/>
            <person name="Winckler T."/>
            <person name="Tanaka Y."/>
            <person name="Shaulsky G."/>
            <person name="Schleicher M."/>
            <person name="Weinstock G.M."/>
            <person name="Rosenthal A."/>
            <person name="Cox E.C."/>
            <person name="Chisholm R.L."/>
            <person name="Gibbs R.A."/>
            <person name="Loomis W.F."/>
            <person name="Platzer M."/>
            <person name="Kay R.R."/>
            <person name="Williams J.G."/>
            <person name="Dear P.H."/>
            <person name="Noegel A.A."/>
            <person name="Barrell B.G."/>
            <person name="Kuspa A."/>
        </authorList>
    </citation>
    <scope>NUCLEOTIDE SEQUENCE [LARGE SCALE GENOMIC DNA]</scope>
    <source>
        <strain>AX4</strain>
    </source>
</reference>
<evidence type="ECO:0000256" key="1">
    <source>
        <dbReference type="SAM" id="MobiDB-lite"/>
    </source>
</evidence>
<evidence type="ECO:0000305" key="2"/>
<comment type="similarity">
    <text evidence="2">Belongs to the histone H2B family.</text>
</comment>
<comment type="caution">
    <text evidence="2">In contrast to other members of the histone H2B family, this protein is much longer and has a highly divergent N-terminus. It is therefore unclear whether it is a real histone.</text>
</comment>